<protein>
    <recommendedName>
        <fullName>Serine hydrolase-like protein</fullName>
        <ecNumber>3.1.-.-</ecNumber>
    </recommendedName>
</protein>
<feature type="chain" id="PRO_0000369253" description="Serine hydrolase-like protein">
    <location>
        <begin position="1"/>
        <end position="326"/>
    </location>
</feature>
<feature type="domain" description="AB hydrolase-1" evidence="2">
    <location>
        <begin position="44"/>
        <end position="155"/>
    </location>
</feature>
<feature type="active site" evidence="2">
    <location>
        <position position="118"/>
    </location>
</feature>
<reference key="1">
    <citation type="journal article" date="2013" name="Nature">
        <title>The zebrafish reference genome sequence and its relationship to the human genome.</title>
        <authorList>
            <person name="Howe K."/>
            <person name="Clark M.D."/>
            <person name="Torroja C.F."/>
            <person name="Torrance J."/>
            <person name="Berthelot C."/>
            <person name="Muffato M."/>
            <person name="Collins J.E."/>
            <person name="Humphray S."/>
            <person name="McLaren K."/>
            <person name="Matthews L."/>
            <person name="McLaren S."/>
            <person name="Sealy I."/>
            <person name="Caccamo M."/>
            <person name="Churcher C."/>
            <person name="Scott C."/>
            <person name="Barrett J.C."/>
            <person name="Koch R."/>
            <person name="Rauch G.J."/>
            <person name="White S."/>
            <person name="Chow W."/>
            <person name="Kilian B."/>
            <person name="Quintais L.T."/>
            <person name="Guerra-Assuncao J.A."/>
            <person name="Zhou Y."/>
            <person name="Gu Y."/>
            <person name="Yen J."/>
            <person name="Vogel J.H."/>
            <person name="Eyre T."/>
            <person name="Redmond S."/>
            <person name="Banerjee R."/>
            <person name="Chi J."/>
            <person name="Fu B."/>
            <person name="Langley E."/>
            <person name="Maguire S.F."/>
            <person name="Laird G.K."/>
            <person name="Lloyd D."/>
            <person name="Kenyon E."/>
            <person name="Donaldson S."/>
            <person name="Sehra H."/>
            <person name="Almeida-King J."/>
            <person name="Loveland J."/>
            <person name="Trevanion S."/>
            <person name="Jones M."/>
            <person name="Quail M."/>
            <person name="Willey D."/>
            <person name="Hunt A."/>
            <person name="Burton J."/>
            <person name="Sims S."/>
            <person name="McLay K."/>
            <person name="Plumb B."/>
            <person name="Davis J."/>
            <person name="Clee C."/>
            <person name="Oliver K."/>
            <person name="Clark R."/>
            <person name="Riddle C."/>
            <person name="Elliot D."/>
            <person name="Threadgold G."/>
            <person name="Harden G."/>
            <person name="Ware D."/>
            <person name="Begum S."/>
            <person name="Mortimore B."/>
            <person name="Kerry G."/>
            <person name="Heath P."/>
            <person name="Phillimore B."/>
            <person name="Tracey A."/>
            <person name="Corby N."/>
            <person name="Dunn M."/>
            <person name="Johnson C."/>
            <person name="Wood J."/>
            <person name="Clark S."/>
            <person name="Pelan S."/>
            <person name="Griffiths G."/>
            <person name="Smith M."/>
            <person name="Glithero R."/>
            <person name="Howden P."/>
            <person name="Barker N."/>
            <person name="Lloyd C."/>
            <person name="Stevens C."/>
            <person name="Harley J."/>
            <person name="Holt K."/>
            <person name="Panagiotidis G."/>
            <person name="Lovell J."/>
            <person name="Beasley H."/>
            <person name="Henderson C."/>
            <person name="Gordon D."/>
            <person name="Auger K."/>
            <person name="Wright D."/>
            <person name="Collins J."/>
            <person name="Raisen C."/>
            <person name="Dyer L."/>
            <person name="Leung K."/>
            <person name="Robertson L."/>
            <person name="Ambridge K."/>
            <person name="Leongamornlert D."/>
            <person name="McGuire S."/>
            <person name="Gilderthorp R."/>
            <person name="Griffiths C."/>
            <person name="Manthravadi D."/>
            <person name="Nichol S."/>
            <person name="Barker G."/>
            <person name="Whitehead S."/>
            <person name="Kay M."/>
            <person name="Brown J."/>
            <person name="Murnane C."/>
            <person name="Gray E."/>
            <person name="Humphries M."/>
            <person name="Sycamore N."/>
            <person name="Barker D."/>
            <person name="Saunders D."/>
            <person name="Wallis J."/>
            <person name="Babbage A."/>
            <person name="Hammond S."/>
            <person name="Mashreghi-Mohammadi M."/>
            <person name="Barr L."/>
            <person name="Martin S."/>
            <person name="Wray P."/>
            <person name="Ellington A."/>
            <person name="Matthews N."/>
            <person name="Ellwood M."/>
            <person name="Woodmansey R."/>
            <person name="Clark G."/>
            <person name="Cooper J."/>
            <person name="Tromans A."/>
            <person name="Grafham D."/>
            <person name="Skuce C."/>
            <person name="Pandian R."/>
            <person name="Andrews R."/>
            <person name="Harrison E."/>
            <person name="Kimberley A."/>
            <person name="Garnett J."/>
            <person name="Fosker N."/>
            <person name="Hall R."/>
            <person name="Garner P."/>
            <person name="Kelly D."/>
            <person name="Bird C."/>
            <person name="Palmer S."/>
            <person name="Gehring I."/>
            <person name="Berger A."/>
            <person name="Dooley C.M."/>
            <person name="Ersan-Urun Z."/>
            <person name="Eser C."/>
            <person name="Geiger H."/>
            <person name="Geisler M."/>
            <person name="Karotki L."/>
            <person name="Kirn A."/>
            <person name="Konantz J."/>
            <person name="Konantz M."/>
            <person name="Oberlander M."/>
            <person name="Rudolph-Geiger S."/>
            <person name="Teucke M."/>
            <person name="Lanz C."/>
            <person name="Raddatz G."/>
            <person name="Osoegawa K."/>
            <person name="Zhu B."/>
            <person name="Rapp A."/>
            <person name="Widaa S."/>
            <person name="Langford C."/>
            <person name="Yang F."/>
            <person name="Schuster S.C."/>
            <person name="Carter N.P."/>
            <person name="Harrow J."/>
            <person name="Ning Z."/>
            <person name="Herrero J."/>
            <person name="Searle S.M."/>
            <person name="Enright A."/>
            <person name="Geisler R."/>
            <person name="Plasterk R.H."/>
            <person name="Lee C."/>
            <person name="Westerfield M."/>
            <person name="de Jong P.J."/>
            <person name="Zon L.I."/>
            <person name="Postlethwait J.H."/>
            <person name="Nusslein-Volhard C."/>
            <person name="Hubbard T.J."/>
            <person name="Roest Crollius H."/>
            <person name="Rogers J."/>
            <person name="Stemple D.L."/>
        </authorList>
    </citation>
    <scope>NUCLEOTIDE SEQUENCE [LARGE SCALE GENOMIC DNA]</scope>
    <source>
        <strain>Tuebingen</strain>
    </source>
</reference>
<reference key="2">
    <citation type="submission" date="2003-01" db="EMBL/GenBank/DDBJ databases">
        <authorList>
            <consortium name="NIH - Zebrafish Gene Collection (ZGC) project"/>
        </authorList>
    </citation>
    <scope>NUCLEOTIDE SEQUENCE [LARGE SCALE MRNA]</scope>
    <source>
        <strain>AB</strain>
        <tissue>Kidney</tissue>
    </source>
</reference>
<sequence>MLPAFMSLRHFTTTTMRRAASEFRMPVPWGELRGQVWGPSHGRPVLCLHGWADNSGTFNTLVPLLPNDWRFVAIDFPGHGLSSHRPDGCFYAFPFYVADVRRVVEALQWKRFSIIGHSMGGNVAGMFSALYPEMVESVVLLDTYGFLPTEVTDMFTNMRKGINDQIQYDNMANERKERVYTYEKAKERLKVANPYLSDQSADILLERAVREVDGGFVFTRDFRINLKNIIYINIDQCLHVLSQVKAKVMLLLAKDGLFKTFTLPDGYADRICKSWTDQKATFVEVEGDHHVHLNNPEAVSSVITDFLQPQSPDQTESQSGNQTSRL</sequence>
<evidence type="ECO:0000250" key="1"/>
<evidence type="ECO:0000255" key="2"/>
<evidence type="ECO:0000305" key="3"/>
<comment type="function">
    <text evidence="1">Probable serine hydrolase.</text>
</comment>
<comment type="similarity">
    <text evidence="3">Belongs to the AB hydrolase superfamily.</text>
</comment>
<comment type="sequence caution" evidence="3">
    <conflict type="erroneous initiation">
        <sequence resource="EMBL-CDS" id="AAH44494"/>
    </conflict>
</comment>
<comment type="sequence caution" evidence="3">
    <conflict type="frameshift">
        <sequence resource="EMBL-CDS" id="AAH66637"/>
    </conflict>
</comment>
<gene>
    <name type="primary">serhl</name>
    <name type="ORF">ch211-214c7.1</name>
    <name type="ORF">zgc:55804</name>
</gene>
<dbReference type="EC" id="3.1.-.-"/>
<dbReference type="EMBL" id="BX511120">
    <property type="protein sequence ID" value="CAM14020.1"/>
    <property type="molecule type" value="Genomic_DNA"/>
</dbReference>
<dbReference type="EMBL" id="BC044494">
    <property type="protein sequence ID" value="AAH44494.1"/>
    <property type="status" value="ALT_INIT"/>
    <property type="molecule type" value="mRNA"/>
</dbReference>
<dbReference type="EMBL" id="BC066637">
    <property type="protein sequence ID" value="AAH66637.1"/>
    <property type="status" value="ALT_FRAME"/>
    <property type="molecule type" value="mRNA"/>
</dbReference>
<dbReference type="RefSeq" id="NP_955909.2">
    <property type="nucleotide sequence ID" value="NM_199615.2"/>
</dbReference>
<dbReference type="SMR" id="A2BGU9"/>
<dbReference type="FunCoup" id="A2BGU9">
    <property type="interactions" value="55"/>
</dbReference>
<dbReference type="STRING" id="7955.ENSDARP00000042157"/>
<dbReference type="ESTHER" id="danre-A2BGU9">
    <property type="family name" value="SERHL"/>
</dbReference>
<dbReference type="MEROPS" id="S33.B18"/>
<dbReference type="PaxDb" id="7955-ENSDARP00000042157"/>
<dbReference type="PeptideAtlas" id="A2BGU9"/>
<dbReference type="Ensembl" id="ENSDART00000042158">
    <property type="protein sequence ID" value="ENSDARP00000042157"/>
    <property type="gene ID" value="ENSDARG00000032340"/>
</dbReference>
<dbReference type="GeneID" id="322648"/>
<dbReference type="KEGG" id="dre:322648"/>
<dbReference type="AGR" id="ZFIN:ZDB-GENE-030131-1368"/>
<dbReference type="CTD" id="94009"/>
<dbReference type="ZFIN" id="ZDB-GENE-030131-1368">
    <property type="gene designation" value="serhl"/>
</dbReference>
<dbReference type="eggNOG" id="KOG1454">
    <property type="taxonomic scope" value="Eukaryota"/>
</dbReference>
<dbReference type="HOGENOM" id="CLU_020336_8_2_1"/>
<dbReference type="InParanoid" id="A2BGU9"/>
<dbReference type="OMA" id="HGWMDVS"/>
<dbReference type="OrthoDB" id="190201at2759"/>
<dbReference type="PhylomeDB" id="A2BGU9"/>
<dbReference type="TreeFam" id="TF326547"/>
<dbReference type="PRO" id="PR:A2BGU9"/>
<dbReference type="Proteomes" id="UP000000437">
    <property type="component" value="Chromosome 1"/>
</dbReference>
<dbReference type="Bgee" id="ENSDARG00000032340">
    <property type="expression patterns" value="Expressed in cardiac ventricle and 24 other cell types or tissues"/>
</dbReference>
<dbReference type="GO" id="GO:0016787">
    <property type="term" value="F:hydrolase activity"/>
    <property type="evidence" value="ECO:0000318"/>
    <property type="project" value="GO_Central"/>
</dbReference>
<dbReference type="Gene3D" id="3.40.50.1820">
    <property type="entry name" value="alpha/beta hydrolase"/>
    <property type="match status" value="1"/>
</dbReference>
<dbReference type="InterPro" id="IPR000073">
    <property type="entry name" value="AB_hydrolase_1"/>
</dbReference>
<dbReference type="InterPro" id="IPR029058">
    <property type="entry name" value="AB_hydrolase_fold"/>
</dbReference>
<dbReference type="InterPro" id="IPR050266">
    <property type="entry name" value="AB_hydrolase_sf"/>
</dbReference>
<dbReference type="PANTHER" id="PTHR43798">
    <property type="entry name" value="MONOACYLGLYCEROL LIPASE"/>
    <property type="match status" value="1"/>
</dbReference>
<dbReference type="PANTHER" id="PTHR43798:SF14">
    <property type="entry name" value="SERINE HYDROLASE-LIKE PROTEIN DDB_G0286239"/>
    <property type="match status" value="1"/>
</dbReference>
<dbReference type="Pfam" id="PF00561">
    <property type="entry name" value="Abhydrolase_1"/>
    <property type="match status" value="1"/>
</dbReference>
<dbReference type="PRINTS" id="PR00111">
    <property type="entry name" value="ABHYDROLASE"/>
</dbReference>
<dbReference type="SUPFAM" id="SSF53474">
    <property type="entry name" value="alpha/beta-Hydrolases"/>
    <property type="match status" value="1"/>
</dbReference>
<proteinExistence type="evidence at transcript level"/>
<name>SERHL_DANRE</name>
<organism>
    <name type="scientific">Danio rerio</name>
    <name type="common">Zebrafish</name>
    <name type="synonym">Brachydanio rerio</name>
    <dbReference type="NCBI Taxonomy" id="7955"/>
    <lineage>
        <taxon>Eukaryota</taxon>
        <taxon>Metazoa</taxon>
        <taxon>Chordata</taxon>
        <taxon>Craniata</taxon>
        <taxon>Vertebrata</taxon>
        <taxon>Euteleostomi</taxon>
        <taxon>Actinopterygii</taxon>
        <taxon>Neopterygii</taxon>
        <taxon>Teleostei</taxon>
        <taxon>Ostariophysi</taxon>
        <taxon>Cypriniformes</taxon>
        <taxon>Danionidae</taxon>
        <taxon>Danioninae</taxon>
        <taxon>Danio</taxon>
    </lineage>
</organism>
<keyword id="KW-0378">Hydrolase</keyword>
<keyword id="KW-1185">Reference proteome</keyword>
<accession>A2BGU9</accession>
<accession>Q6NYD3</accession>
<accession>Q803G4</accession>